<reference key="1">
    <citation type="journal article" date="2007" name="Genome Res.">
        <title>Comparative sequence analyses reveal rapid and divergent evolutionary changes of the WFDC locus in the primate lineage.</title>
        <authorList>
            <consortium name="NISC comparative sequencing program"/>
            <person name="Hurle B."/>
            <person name="Swanson W."/>
            <person name="Green E.D."/>
        </authorList>
    </citation>
    <scope>NUCLEOTIDE SEQUENCE [GENOMIC DNA]</scope>
</reference>
<organism>
    <name type="scientific">Gorilla gorilla gorilla</name>
    <name type="common">Western lowland gorilla</name>
    <dbReference type="NCBI Taxonomy" id="9595"/>
    <lineage>
        <taxon>Eukaryota</taxon>
        <taxon>Metazoa</taxon>
        <taxon>Chordata</taxon>
        <taxon>Craniata</taxon>
        <taxon>Vertebrata</taxon>
        <taxon>Euteleostomi</taxon>
        <taxon>Mammalia</taxon>
        <taxon>Eutheria</taxon>
        <taxon>Euarchontoglires</taxon>
        <taxon>Primates</taxon>
        <taxon>Haplorrhini</taxon>
        <taxon>Catarrhini</taxon>
        <taxon>Hominidae</taxon>
        <taxon>Gorilla</taxon>
    </lineage>
</organism>
<accession>A4K2R3</accession>
<feature type="chain" id="PRO_0000289616" description="Delayed-rectifier potassium channel regulatory subunit KCNS1">
    <location>
        <begin position="1"/>
        <end position="526"/>
    </location>
</feature>
<feature type="topological domain" description="Cytoplasmic" evidence="2">
    <location>
        <begin position="1"/>
        <end position="217"/>
    </location>
</feature>
<feature type="transmembrane region" description="Helical; Name=Segment S1" evidence="2">
    <location>
        <begin position="218"/>
        <end position="239"/>
    </location>
</feature>
<feature type="topological domain" description="Extracellular" evidence="2">
    <location>
        <begin position="240"/>
        <end position="270"/>
    </location>
</feature>
<feature type="transmembrane region" description="Helical; Name=Segment S2" evidence="2">
    <location>
        <begin position="271"/>
        <end position="293"/>
    </location>
</feature>
<feature type="topological domain" description="Cytoplasmic" evidence="2">
    <location>
        <begin position="294"/>
        <end position="304"/>
    </location>
</feature>
<feature type="transmembrane region" description="Helical; Name=Segment S3" evidence="2">
    <location>
        <begin position="305"/>
        <end position="322"/>
    </location>
</feature>
<feature type="topological domain" description="Extracellular" evidence="2">
    <location>
        <begin position="323"/>
        <end position="337"/>
    </location>
</feature>
<feature type="transmembrane region" description="Helical; Voltage-sensor; Name=Segment S4" evidence="2">
    <location>
        <begin position="338"/>
        <end position="358"/>
    </location>
</feature>
<feature type="topological domain" description="Cytoplasmic" evidence="2">
    <location>
        <begin position="359"/>
        <end position="373"/>
    </location>
</feature>
<feature type="transmembrane region" description="Helical; Name=Segment S5" evidence="2">
    <location>
        <begin position="374"/>
        <end position="395"/>
    </location>
</feature>
<feature type="topological domain" description="Extracellular" evidence="2">
    <location>
        <begin position="396"/>
        <end position="408"/>
    </location>
</feature>
<feature type="intramembrane region" description="Helical; Name=Pore helix" evidence="2">
    <location>
        <begin position="409"/>
        <end position="420"/>
    </location>
</feature>
<feature type="intramembrane region" evidence="2">
    <location>
        <begin position="421"/>
        <end position="428"/>
    </location>
</feature>
<feature type="topological domain" description="Extracellular" evidence="2">
    <location>
        <begin position="429"/>
        <end position="435"/>
    </location>
</feature>
<feature type="transmembrane region" description="Helical; Name=Segment S6" evidence="2">
    <location>
        <begin position="436"/>
        <end position="464"/>
    </location>
</feature>
<feature type="topological domain" description="Cytoplasmic" evidence="2">
    <location>
        <begin position="465"/>
        <end position="526"/>
    </location>
</feature>
<feature type="region of interest" description="Disordered" evidence="4">
    <location>
        <begin position="492"/>
        <end position="526"/>
    </location>
</feature>
<feature type="short sequence motif" description="Selectivity filter" evidence="2">
    <location>
        <begin position="421"/>
        <end position="426"/>
    </location>
</feature>
<feature type="compositionally biased region" description="Polar residues" evidence="4">
    <location>
        <begin position="496"/>
        <end position="507"/>
    </location>
</feature>
<protein>
    <recommendedName>
        <fullName evidence="3">Delayed-rectifier potassium channel regulatory subunit KCNS1</fullName>
    </recommendedName>
    <alternativeName>
        <fullName>Delayed-rectifier K(+) channel alpha subunit 1</fullName>
    </alternativeName>
    <alternativeName>
        <fullName>Delayed-rectifier potassium channel subunit Kv9.1</fullName>
    </alternativeName>
</protein>
<sequence length="526" mass="58363">MLMLLVRGTHYENLRSKVVLPTPLAGRSTETFVSEFPGPDTGIRWRRSDEALRVNVGGVRRQLSARALARFPGTRLGRLHAAASEEQARRLCDDYDEAAREFYFDRHPGFFLSLLHFYRTGHLHVLDELCVFAFGQEADYWGLGENALAACCRARYLERRLTQPHAWDEDSDTPSSVDPCPDEISDVQRELARYGAARCGRLRRRLWLTMENPGYSLPSKLFSCVSISVVLASIAAMCIHSLPEYQAREAAAAVAAVAAGRSPEGVRDDPVLRRLEYFCIAWFSFEVSSRLLLAPSTRNFFCHPLNLIDIVSVLPFYLTLLAGVALGDQGGKEFGHLGKVVQVFRLMRIFRVLKLARHSTGLRSLGATLKHSYREVGILLLYLAVGVSVFSGVAYTAEKEEDVGFNTIPACWWWGTVSMTTVGYGDVVPVTVAGKLAASGCILGGILVVALPITIIFNKFSHFYRRQKALEAAVRNSNHREFEDLLSSVDGVSEASLETSGETSQEGRSADLESQAPSEPPHPQRY</sequence>
<dbReference type="EMBL" id="DP000041">
    <property type="protein sequence ID" value="ABO52948.1"/>
    <property type="molecule type" value="Genomic_DNA"/>
</dbReference>
<dbReference type="SMR" id="A4K2R3"/>
<dbReference type="FunCoup" id="A4K2R3">
    <property type="interactions" value="30"/>
</dbReference>
<dbReference type="STRING" id="9593.ENSGGOP00000036472"/>
<dbReference type="eggNOG" id="KOG3713">
    <property type="taxonomic scope" value="Eukaryota"/>
</dbReference>
<dbReference type="InParanoid" id="A4K2R3"/>
<dbReference type="Proteomes" id="UP000001519">
    <property type="component" value="Unplaced"/>
</dbReference>
<dbReference type="GO" id="GO:0016020">
    <property type="term" value="C:membrane"/>
    <property type="evidence" value="ECO:0000318"/>
    <property type="project" value="GO_Central"/>
</dbReference>
<dbReference type="GO" id="GO:0048471">
    <property type="term" value="C:perinuclear region of cytoplasm"/>
    <property type="evidence" value="ECO:0000250"/>
    <property type="project" value="UniProtKB"/>
</dbReference>
<dbReference type="GO" id="GO:0005886">
    <property type="term" value="C:plasma membrane"/>
    <property type="evidence" value="ECO:0000250"/>
    <property type="project" value="UniProtKB"/>
</dbReference>
<dbReference type="GO" id="GO:0008076">
    <property type="term" value="C:voltage-gated potassium channel complex"/>
    <property type="evidence" value="ECO:0000250"/>
    <property type="project" value="UniProtKB"/>
</dbReference>
<dbReference type="GO" id="GO:0015459">
    <property type="term" value="F:potassium channel regulator activity"/>
    <property type="evidence" value="ECO:0000250"/>
    <property type="project" value="UniProtKB"/>
</dbReference>
<dbReference type="GO" id="GO:0005249">
    <property type="term" value="F:voltage-gated potassium channel activity"/>
    <property type="evidence" value="ECO:0007669"/>
    <property type="project" value="InterPro"/>
</dbReference>
<dbReference type="GO" id="GO:0001508">
    <property type="term" value="P:action potential"/>
    <property type="evidence" value="ECO:0000318"/>
    <property type="project" value="GO_Central"/>
</dbReference>
<dbReference type="GO" id="GO:0071805">
    <property type="term" value="P:potassium ion transmembrane transport"/>
    <property type="evidence" value="ECO:0000318"/>
    <property type="project" value="GO_Central"/>
</dbReference>
<dbReference type="GO" id="GO:0006813">
    <property type="term" value="P:potassium ion transport"/>
    <property type="evidence" value="ECO:0000250"/>
    <property type="project" value="UniProtKB"/>
</dbReference>
<dbReference type="GO" id="GO:0051260">
    <property type="term" value="P:protein homooligomerization"/>
    <property type="evidence" value="ECO:0007669"/>
    <property type="project" value="InterPro"/>
</dbReference>
<dbReference type="GO" id="GO:1901379">
    <property type="term" value="P:regulation of potassium ion transmembrane transport"/>
    <property type="evidence" value="ECO:0000250"/>
    <property type="project" value="UniProtKB"/>
</dbReference>
<dbReference type="FunFam" id="1.10.287.70:FF:000005">
    <property type="entry name" value="potassium voltage-gated channel subfamily G member 1"/>
    <property type="match status" value="1"/>
</dbReference>
<dbReference type="FunFam" id="3.30.710.10:FF:000102">
    <property type="entry name" value="Potassium voltage-gated channel subfamily S member 1"/>
    <property type="match status" value="1"/>
</dbReference>
<dbReference type="FunFam" id="1.20.120.350:FF:000029">
    <property type="entry name" value="Potassium voltage-gated channel subfamily S member 2"/>
    <property type="match status" value="1"/>
</dbReference>
<dbReference type="Gene3D" id="1.10.287.70">
    <property type="match status" value="1"/>
</dbReference>
<dbReference type="Gene3D" id="3.30.710.10">
    <property type="entry name" value="Potassium Channel Kv1.1, Chain A"/>
    <property type="match status" value="1"/>
</dbReference>
<dbReference type="Gene3D" id="1.20.120.350">
    <property type="entry name" value="Voltage-gated potassium channels. Chain C"/>
    <property type="match status" value="1"/>
</dbReference>
<dbReference type="InterPro" id="IPR000210">
    <property type="entry name" value="BTB/POZ_dom"/>
</dbReference>
<dbReference type="InterPro" id="IPR005821">
    <property type="entry name" value="Ion_trans_dom"/>
</dbReference>
<dbReference type="InterPro" id="IPR003968">
    <property type="entry name" value="K_chnl_volt-dep_Kv"/>
</dbReference>
<dbReference type="InterPro" id="IPR003971">
    <property type="entry name" value="K_chnl_volt-dep_Kv5/Kv9"/>
</dbReference>
<dbReference type="InterPro" id="IPR011333">
    <property type="entry name" value="SKP1/BTB/POZ_sf"/>
</dbReference>
<dbReference type="InterPro" id="IPR003131">
    <property type="entry name" value="T1-type_BTB"/>
</dbReference>
<dbReference type="InterPro" id="IPR028325">
    <property type="entry name" value="VG_K_chnl"/>
</dbReference>
<dbReference type="InterPro" id="IPR027359">
    <property type="entry name" value="Volt_channel_dom_sf"/>
</dbReference>
<dbReference type="PANTHER" id="PTHR11537:SF61">
    <property type="entry name" value="POTASSIUM VOLTAGE-GATED CHANNEL SUBFAMILY S MEMBER 1"/>
    <property type="match status" value="1"/>
</dbReference>
<dbReference type="PANTHER" id="PTHR11537">
    <property type="entry name" value="VOLTAGE-GATED POTASSIUM CHANNEL"/>
    <property type="match status" value="1"/>
</dbReference>
<dbReference type="Pfam" id="PF02214">
    <property type="entry name" value="BTB_2"/>
    <property type="match status" value="1"/>
</dbReference>
<dbReference type="Pfam" id="PF00520">
    <property type="entry name" value="Ion_trans"/>
    <property type="match status" value="1"/>
</dbReference>
<dbReference type="PRINTS" id="PR00169">
    <property type="entry name" value="KCHANNEL"/>
</dbReference>
<dbReference type="PRINTS" id="PR01494">
    <property type="entry name" value="KV9CHANNEL"/>
</dbReference>
<dbReference type="PRINTS" id="PR01491">
    <property type="entry name" value="KVCHANNEL"/>
</dbReference>
<dbReference type="SMART" id="SM00225">
    <property type="entry name" value="BTB"/>
    <property type="match status" value="1"/>
</dbReference>
<dbReference type="SUPFAM" id="SSF54695">
    <property type="entry name" value="POZ domain"/>
    <property type="match status" value="1"/>
</dbReference>
<dbReference type="SUPFAM" id="SSF81324">
    <property type="entry name" value="Voltage-gated potassium channels"/>
    <property type="match status" value="1"/>
</dbReference>
<comment type="function">
    <text evidence="1 3">Potassium channel regulatory subunit that modulate the delayed rectifier voltage-gated potassium channel activity of KCNB1 and KCNB2 by altering their kinetics, expression levels, and shifting the half-inactivation potential to more polarized values. While it does not form functional channels on its own, it can form functional heterotetrameric channels with KCNB1 and KCNB2 (By similarity). Each regulatory subunit has unique regulatory properties that can lead to extensive inhibition, significant changes in kinetics, and/or substantial shifts in the voltage dependencies of the inactivation process (By similarity).</text>
</comment>
<comment type="subunit">
    <text evidence="1 3">Heterotetramer with KCNB1 (By similarity). Heterotetramer with KCNB2 (By similarity). Does not form homomultimers (By similarity).</text>
</comment>
<comment type="subcellular location">
    <subcellularLocation>
        <location evidence="3">Cell membrane</location>
        <topology evidence="3">Multi-pass membrane protein</topology>
    </subcellularLocation>
    <text evidence="3">May not reach the plasma membrane but remain in an intracellular compartment in the absence of KCNB1 or KCNB2.</text>
</comment>
<comment type="domain">
    <text evidence="2">The transmembrane segment S4 functions as a voltage-sensor and is characterized by a series of positively charged amino acids at every third position. Channel opening and closing is effected by a conformation change that affects the position and orientation of the voltage-sensor paddle formed by S3 and S4 within the membrane. A transmembrane electric field that is positive inside would push the positively charged S4 segment outwards, thereby opening the pore, while a field that is negative inside would pull the S4 segment inwards and close the pore. Changes in the position and orientation of S4 are then transmitted to the activation gate formed by the inner helix bundle via the S4-S5 linker region.</text>
</comment>
<comment type="similarity">
    <text evidence="5">Belongs to the potassium channel family. S (TC 1.A.1.2) subfamily. Kv9.1/KCNS1 sub-subfamily.</text>
</comment>
<evidence type="ECO:0000250" key="1">
    <source>
        <dbReference type="UniProtKB" id="O35173"/>
    </source>
</evidence>
<evidence type="ECO:0000250" key="2">
    <source>
        <dbReference type="UniProtKB" id="P63142"/>
    </source>
</evidence>
<evidence type="ECO:0000250" key="3">
    <source>
        <dbReference type="UniProtKB" id="Q96KK3"/>
    </source>
</evidence>
<evidence type="ECO:0000256" key="4">
    <source>
        <dbReference type="SAM" id="MobiDB-lite"/>
    </source>
</evidence>
<evidence type="ECO:0000305" key="5"/>
<name>KCNS1_GORGO</name>
<proteinExistence type="inferred from homology"/>
<gene>
    <name evidence="3" type="primary">KCNS1</name>
</gene>
<keyword id="KW-1003">Cell membrane</keyword>
<keyword id="KW-0407">Ion channel</keyword>
<keyword id="KW-0406">Ion transport</keyword>
<keyword id="KW-0472">Membrane</keyword>
<keyword id="KW-0630">Potassium</keyword>
<keyword id="KW-0631">Potassium channel</keyword>
<keyword id="KW-0633">Potassium transport</keyword>
<keyword id="KW-1185">Reference proteome</keyword>
<keyword id="KW-0812">Transmembrane</keyword>
<keyword id="KW-1133">Transmembrane helix</keyword>
<keyword id="KW-0813">Transport</keyword>
<keyword id="KW-0851">Voltage-gated channel</keyword>